<comment type="function">
    <text evidence="1">Major role in the synthesis of nucleoside triphosphates other than ATP. The ATP gamma phosphate is transferred to the NDP beta phosphate via a ping-pong mechanism, using a phosphorylated active-site intermediate.</text>
</comment>
<comment type="catalytic activity">
    <reaction evidence="1">
        <text>a 2'-deoxyribonucleoside 5'-diphosphate + ATP = a 2'-deoxyribonucleoside 5'-triphosphate + ADP</text>
        <dbReference type="Rhea" id="RHEA:44640"/>
        <dbReference type="ChEBI" id="CHEBI:30616"/>
        <dbReference type="ChEBI" id="CHEBI:61560"/>
        <dbReference type="ChEBI" id="CHEBI:73316"/>
        <dbReference type="ChEBI" id="CHEBI:456216"/>
        <dbReference type="EC" id="2.7.4.6"/>
    </reaction>
</comment>
<comment type="catalytic activity">
    <reaction evidence="1">
        <text>a ribonucleoside 5'-diphosphate + ATP = a ribonucleoside 5'-triphosphate + ADP</text>
        <dbReference type="Rhea" id="RHEA:18113"/>
        <dbReference type="ChEBI" id="CHEBI:30616"/>
        <dbReference type="ChEBI" id="CHEBI:57930"/>
        <dbReference type="ChEBI" id="CHEBI:61557"/>
        <dbReference type="ChEBI" id="CHEBI:456216"/>
        <dbReference type="EC" id="2.7.4.6"/>
    </reaction>
</comment>
<comment type="cofactor">
    <cofactor evidence="1">
        <name>Mg(2+)</name>
        <dbReference type="ChEBI" id="CHEBI:18420"/>
    </cofactor>
</comment>
<comment type="subunit">
    <text evidence="1">Homotetramer.</text>
</comment>
<comment type="subcellular location">
    <subcellularLocation>
        <location evidence="1">Cytoplasm</location>
    </subcellularLocation>
</comment>
<comment type="similarity">
    <text evidence="1">Belongs to the NDK family.</text>
</comment>
<gene>
    <name evidence="1" type="primary">ndk</name>
    <name type="ordered locus">Noca_3466</name>
</gene>
<dbReference type="EC" id="2.7.4.6" evidence="1"/>
<dbReference type="EMBL" id="CP000509">
    <property type="protein sequence ID" value="ABL82966.1"/>
    <property type="molecule type" value="Genomic_DNA"/>
</dbReference>
<dbReference type="SMR" id="A1SMD1"/>
<dbReference type="STRING" id="196162.Noca_3466"/>
<dbReference type="KEGG" id="nca:Noca_3466"/>
<dbReference type="eggNOG" id="COG0105">
    <property type="taxonomic scope" value="Bacteria"/>
</dbReference>
<dbReference type="HOGENOM" id="CLU_060216_6_3_11"/>
<dbReference type="Proteomes" id="UP000000640">
    <property type="component" value="Chromosome"/>
</dbReference>
<dbReference type="GO" id="GO:0005737">
    <property type="term" value="C:cytoplasm"/>
    <property type="evidence" value="ECO:0007669"/>
    <property type="project" value="UniProtKB-SubCell"/>
</dbReference>
<dbReference type="GO" id="GO:0005524">
    <property type="term" value="F:ATP binding"/>
    <property type="evidence" value="ECO:0007669"/>
    <property type="project" value="UniProtKB-UniRule"/>
</dbReference>
<dbReference type="GO" id="GO:0046872">
    <property type="term" value="F:metal ion binding"/>
    <property type="evidence" value="ECO:0007669"/>
    <property type="project" value="UniProtKB-KW"/>
</dbReference>
<dbReference type="GO" id="GO:0004550">
    <property type="term" value="F:nucleoside diphosphate kinase activity"/>
    <property type="evidence" value="ECO:0007669"/>
    <property type="project" value="UniProtKB-UniRule"/>
</dbReference>
<dbReference type="GO" id="GO:0006241">
    <property type="term" value="P:CTP biosynthetic process"/>
    <property type="evidence" value="ECO:0007669"/>
    <property type="project" value="UniProtKB-UniRule"/>
</dbReference>
<dbReference type="GO" id="GO:0006183">
    <property type="term" value="P:GTP biosynthetic process"/>
    <property type="evidence" value="ECO:0007669"/>
    <property type="project" value="UniProtKB-UniRule"/>
</dbReference>
<dbReference type="GO" id="GO:0006228">
    <property type="term" value="P:UTP biosynthetic process"/>
    <property type="evidence" value="ECO:0007669"/>
    <property type="project" value="UniProtKB-UniRule"/>
</dbReference>
<dbReference type="CDD" id="cd04413">
    <property type="entry name" value="NDPk_I"/>
    <property type="match status" value="1"/>
</dbReference>
<dbReference type="FunFam" id="3.30.70.141:FF:000003">
    <property type="entry name" value="Nucleoside diphosphate kinase"/>
    <property type="match status" value="1"/>
</dbReference>
<dbReference type="Gene3D" id="3.30.70.141">
    <property type="entry name" value="Nucleoside diphosphate kinase-like domain"/>
    <property type="match status" value="1"/>
</dbReference>
<dbReference type="HAMAP" id="MF_00451">
    <property type="entry name" value="NDP_kinase"/>
    <property type="match status" value="1"/>
</dbReference>
<dbReference type="InterPro" id="IPR034907">
    <property type="entry name" value="NDK-like_dom"/>
</dbReference>
<dbReference type="InterPro" id="IPR036850">
    <property type="entry name" value="NDK-like_dom_sf"/>
</dbReference>
<dbReference type="InterPro" id="IPR001564">
    <property type="entry name" value="Nucleoside_diP_kinase"/>
</dbReference>
<dbReference type="InterPro" id="IPR023005">
    <property type="entry name" value="Nucleoside_diP_kinase_AS"/>
</dbReference>
<dbReference type="NCBIfam" id="NF001908">
    <property type="entry name" value="PRK00668.1"/>
    <property type="match status" value="1"/>
</dbReference>
<dbReference type="PANTHER" id="PTHR11349">
    <property type="entry name" value="NUCLEOSIDE DIPHOSPHATE KINASE"/>
    <property type="match status" value="1"/>
</dbReference>
<dbReference type="Pfam" id="PF00334">
    <property type="entry name" value="NDK"/>
    <property type="match status" value="1"/>
</dbReference>
<dbReference type="PRINTS" id="PR01243">
    <property type="entry name" value="NUCDPKINASE"/>
</dbReference>
<dbReference type="SMART" id="SM00562">
    <property type="entry name" value="NDK"/>
    <property type="match status" value="1"/>
</dbReference>
<dbReference type="SUPFAM" id="SSF54919">
    <property type="entry name" value="Nucleoside diphosphate kinase, NDK"/>
    <property type="match status" value="1"/>
</dbReference>
<dbReference type="PROSITE" id="PS00469">
    <property type="entry name" value="NDPK"/>
    <property type="match status" value="1"/>
</dbReference>
<dbReference type="PROSITE" id="PS51374">
    <property type="entry name" value="NDPK_LIKE"/>
    <property type="match status" value="1"/>
</dbReference>
<accession>A1SMD1</accession>
<reference key="1">
    <citation type="submission" date="2006-12" db="EMBL/GenBank/DDBJ databases">
        <title>Complete sequence of chromosome 1 of Nocardioides sp. JS614.</title>
        <authorList>
            <person name="Copeland A."/>
            <person name="Lucas S."/>
            <person name="Lapidus A."/>
            <person name="Barry K."/>
            <person name="Detter J.C."/>
            <person name="Glavina del Rio T."/>
            <person name="Hammon N."/>
            <person name="Israni S."/>
            <person name="Dalin E."/>
            <person name="Tice H."/>
            <person name="Pitluck S."/>
            <person name="Thompson L.S."/>
            <person name="Brettin T."/>
            <person name="Bruce D."/>
            <person name="Han C."/>
            <person name="Tapia R."/>
            <person name="Schmutz J."/>
            <person name="Larimer F."/>
            <person name="Land M."/>
            <person name="Hauser L."/>
            <person name="Kyrpides N."/>
            <person name="Kim E."/>
            <person name="Mattes T."/>
            <person name="Gossett J."/>
            <person name="Richardson P."/>
        </authorList>
    </citation>
    <scope>NUCLEOTIDE SEQUENCE [LARGE SCALE GENOMIC DNA]</scope>
    <source>
        <strain>ATCC BAA-499 / JS614</strain>
    </source>
</reference>
<feature type="chain" id="PRO_1000080970" description="Nucleoside diphosphate kinase">
    <location>
        <begin position="1"/>
        <end position="135"/>
    </location>
</feature>
<feature type="active site" description="Pros-phosphohistidine intermediate" evidence="1">
    <location>
        <position position="116"/>
    </location>
</feature>
<feature type="binding site" evidence="1">
    <location>
        <position position="10"/>
    </location>
    <ligand>
        <name>ATP</name>
        <dbReference type="ChEBI" id="CHEBI:30616"/>
    </ligand>
</feature>
<feature type="binding site" evidence="1">
    <location>
        <position position="58"/>
    </location>
    <ligand>
        <name>ATP</name>
        <dbReference type="ChEBI" id="CHEBI:30616"/>
    </ligand>
</feature>
<feature type="binding site" evidence="1">
    <location>
        <position position="86"/>
    </location>
    <ligand>
        <name>ATP</name>
        <dbReference type="ChEBI" id="CHEBI:30616"/>
    </ligand>
</feature>
<feature type="binding site" evidence="1">
    <location>
        <position position="92"/>
    </location>
    <ligand>
        <name>ATP</name>
        <dbReference type="ChEBI" id="CHEBI:30616"/>
    </ligand>
</feature>
<feature type="binding site" evidence="1">
    <location>
        <position position="103"/>
    </location>
    <ligand>
        <name>ATP</name>
        <dbReference type="ChEBI" id="CHEBI:30616"/>
    </ligand>
</feature>
<feature type="binding site" evidence="1">
    <location>
        <position position="113"/>
    </location>
    <ligand>
        <name>ATP</name>
        <dbReference type="ChEBI" id="CHEBI:30616"/>
    </ligand>
</feature>
<evidence type="ECO:0000255" key="1">
    <source>
        <dbReference type="HAMAP-Rule" id="MF_00451"/>
    </source>
</evidence>
<sequence>MSLRTLVLLKPDAVRRGLVGAILSRYEAKGLTIVAMEQRTIDAAVADQHYAEHVAKEFYPPLRDFVTGGPLVALVLEGDNSVDVVRLLNGATDGSKAAPGTIRGDFSLSNRENLVHGSDSPESAEREIGIWFPGL</sequence>
<organism>
    <name type="scientific">Nocardioides sp. (strain ATCC BAA-499 / JS614)</name>
    <dbReference type="NCBI Taxonomy" id="196162"/>
    <lineage>
        <taxon>Bacteria</taxon>
        <taxon>Bacillati</taxon>
        <taxon>Actinomycetota</taxon>
        <taxon>Actinomycetes</taxon>
        <taxon>Propionibacteriales</taxon>
        <taxon>Nocardioidaceae</taxon>
        <taxon>Nocardioides</taxon>
    </lineage>
</organism>
<keyword id="KW-0067">ATP-binding</keyword>
<keyword id="KW-0963">Cytoplasm</keyword>
<keyword id="KW-0418">Kinase</keyword>
<keyword id="KW-0460">Magnesium</keyword>
<keyword id="KW-0479">Metal-binding</keyword>
<keyword id="KW-0546">Nucleotide metabolism</keyword>
<keyword id="KW-0547">Nucleotide-binding</keyword>
<keyword id="KW-0597">Phosphoprotein</keyword>
<keyword id="KW-1185">Reference proteome</keyword>
<keyword id="KW-0808">Transferase</keyword>
<proteinExistence type="inferred from homology"/>
<protein>
    <recommendedName>
        <fullName evidence="1">Nucleoside diphosphate kinase</fullName>
        <shortName evidence="1">NDK</shortName>
        <shortName evidence="1">NDP kinase</shortName>
        <ecNumber evidence="1">2.7.4.6</ecNumber>
    </recommendedName>
    <alternativeName>
        <fullName evidence="1">Nucleoside-2-P kinase</fullName>
    </alternativeName>
</protein>
<name>NDK_NOCSJ</name>